<keyword id="KW-0066">ATP synthesis</keyword>
<keyword id="KW-0997">Cell inner membrane</keyword>
<keyword id="KW-1003">Cell membrane</keyword>
<keyword id="KW-0138">CF(0)</keyword>
<keyword id="KW-0375">Hydrogen ion transport</keyword>
<keyword id="KW-0406">Ion transport</keyword>
<keyword id="KW-0472">Membrane</keyword>
<keyword id="KW-0812">Transmembrane</keyword>
<keyword id="KW-1133">Transmembrane helix</keyword>
<keyword id="KW-0813">Transport</keyword>
<protein>
    <recommendedName>
        <fullName evidence="1">ATP synthase subunit b</fullName>
    </recommendedName>
    <alternativeName>
        <fullName evidence="1">ATP synthase F(0) sector subunit b</fullName>
    </alternativeName>
    <alternativeName>
        <fullName evidence="1">ATPase subunit I</fullName>
    </alternativeName>
    <alternativeName>
        <fullName evidence="1">F-type ATPase subunit b</fullName>
        <shortName evidence="1">F-ATPase subunit b</shortName>
    </alternativeName>
</protein>
<sequence length="169" mass="19247">MEIIQKFGLEAKLFLFQLINFLIIVFILKKFLFAPLKKILDERKRKIEQSLQDAENAKIALENASEKKKNILAKAKSSADTLMATVKVSIKETKEKAVIEAKQRSEQIIDEAKQKAATEFESMNKKIGKISVDISGKVMSKVLSDLFTETEKQKLMSRALEKIDENIKN</sequence>
<gene>
    <name evidence="1" type="primary">atpF</name>
    <name type="ordered locus">TGRD_468</name>
</gene>
<reference key="1">
    <citation type="journal article" date="2008" name="Proc. Natl. Acad. Sci. U.S.A.">
        <title>Complete genome of the uncultured termite group 1 bacteria in a single host protist cell.</title>
        <authorList>
            <person name="Hongoh Y."/>
            <person name="Sharma V.K."/>
            <person name="Prakash T."/>
            <person name="Noda S."/>
            <person name="Taylor T.D."/>
            <person name="Kudo T."/>
            <person name="Sakaki Y."/>
            <person name="Toyoda A."/>
            <person name="Hattori M."/>
            <person name="Ohkuma M."/>
        </authorList>
    </citation>
    <scope>NUCLEOTIDE SEQUENCE [LARGE SCALE GENOMIC DNA]</scope>
</reference>
<feature type="chain" id="PRO_0000368851" description="ATP synthase subunit b">
    <location>
        <begin position="1"/>
        <end position="169"/>
    </location>
</feature>
<feature type="transmembrane region" description="Helical" evidence="1">
    <location>
        <begin position="13"/>
        <end position="33"/>
    </location>
</feature>
<accession>B1H0B9</accession>
<dbReference type="EMBL" id="AP009510">
    <property type="protein sequence ID" value="BAG13951.1"/>
    <property type="molecule type" value="Genomic_DNA"/>
</dbReference>
<dbReference type="RefSeq" id="WP_015423477.1">
    <property type="nucleotide sequence ID" value="NC_020419.1"/>
</dbReference>
<dbReference type="SMR" id="B1H0B9"/>
<dbReference type="STRING" id="471821.TGRD_468"/>
<dbReference type="KEGG" id="rsd:TGRD_468"/>
<dbReference type="HOGENOM" id="CLU_079215_4_5_0"/>
<dbReference type="Proteomes" id="UP000001691">
    <property type="component" value="Chromosome"/>
</dbReference>
<dbReference type="GO" id="GO:0005886">
    <property type="term" value="C:plasma membrane"/>
    <property type="evidence" value="ECO:0007669"/>
    <property type="project" value="UniProtKB-SubCell"/>
</dbReference>
<dbReference type="GO" id="GO:0045259">
    <property type="term" value="C:proton-transporting ATP synthase complex"/>
    <property type="evidence" value="ECO:0007669"/>
    <property type="project" value="UniProtKB-KW"/>
</dbReference>
<dbReference type="GO" id="GO:0046933">
    <property type="term" value="F:proton-transporting ATP synthase activity, rotational mechanism"/>
    <property type="evidence" value="ECO:0007669"/>
    <property type="project" value="UniProtKB-UniRule"/>
</dbReference>
<dbReference type="GO" id="GO:0046961">
    <property type="term" value="F:proton-transporting ATPase activity, rotational mechanism"/>
    <property type="evidence" value="ECO:0007669"/>
    <property type="project" value="TreeGrafter"/>
</dbReference>
<dbReference type="CDD" id="cd06503">
    <property type="entry name" value="ATP-synt_Fo_b"/>
    <property type="match status" value="1"/>
</dbReference>
<dbReference type="Gene3D" id="6.10.250.1580">
    <property type="match status" value="1"/>
</dbReference>
<dbReference type="HAMAP" id="MF_01398">
    <property type="entry name" value="ATP_synth_b_bprime"/>
    <property type="match status" value="1"/>
</dbReference>
<dbReference type="InterPro" id="IPR002146">
    <property type="entry name" value="ATP_synth_b/b'su_bac/chlpt"/>
</dbReference>
<dbReference type="InterPro" id="IPR005864">
    <property type="entry name" value="ATP_synth_F0_bsu_bac"/>
</dbReference>
<dbReference type="InterPro" id="IPR050059">
    <property type="entry name" value="ATP_synthase_B_chain"/>
</dbReference>
<dbReference type="NCBIfam" id="TIGR01144">
    <property type="entry name" value="ATP_synt_b"/>
    <property type="match status" value="1"/>
</dbReference>
<dbReference type="PANTHER" id="PTHR33445">
    <property type="entry name" value="ATP SYNTHASE SUBUNIT B', CHLOROPLASTIC"/>
    <property type="match status" value="1"/>
</dbReference>
<dbReference type="PANTHER" id="PTHR33445:SF2">
    <property type="entry name" value="ATP SYNTHASE SUBUNIT B', CHLOROPLASTIC"/>
    <property type="match status" value="1"/>
</dbReference>
<dbReference type="Pfam" id="PF00430">
    <property type="entry name" value="ATP-synt_B"/>
    <property type="match status" value="1"/>
</dbReference>
<evidence type="ECO:0000255" key="1">
    <source>
        <dbReference type="HAMAP-Rule" id="MF_01398"/>
    </source>
</evidence>
<name>ATPF_ENDTX</name>
<proteinExistence type="inferred from homology"/>
<comment type="function">
    <text evidence="1">F(1)F(0) ATP synthase produces ATP from ADP in the presence of a proton or sodium gradient. F-type ATPases consist of two structural domains, F(1) containing the extramembraneous catalytic core and F(0) containing the membrane proton channel, linked together by a central stalk and a peripheral stalk. During catalysis, ATP synthesis in the catalytic domain of F(1) is coupled via a rotary mechanism of the central stalk subunits to proton translocation.</text>
</comment>
<comment type="function">
    <text evidence="1">Component of the F(0) channel, it forms part of the peripheral stalk, linking F(1) to F(0).</text>
</comment>
<comment type="subunit">
    <text evidence="1">F-type ATPases have 2 components, F(1) - the catalytic core - and F(0) - the membrane proton channel. F(1) has five subunits: alpha(3), beta(3), gamma(1), delta(1), epsilon(1). F(0) has three main subunits: a(1), b(2) and c(10-14). The alpha and beta chains form an alternating ring which encloses part of the gamma chain. F(1) is attached to F(0) by a central stalk formed by the gamma and epsilon chains, while a peripheral stalk is formed by the delta and b chains.</text>
</comment>
<comment type="subcellular location">
    <subcellularLocation>
        <location evidence="1">Cell inner membrane</location>
        <topology evidence="1">Single-pass membrane protein</topology>
    </subcellularLocation>
</comment>
<comment type="similarity">
    <text evidence="1">Belongs to the ATPase B chain family.</text>
</comment>
<organism>
    <name type="scientific">Endomicrobium trichonymphae</name>
    <dbReference type="NCBI Taxonomy" id="1408204"/>
    <lineage>
        <taxon>Bacteria</taxon>
        <taxon>Pseudomonadati</taxon>
        <taxon>Elusimicrobiota</taxon>
        <taxon>Endomicrobiia</taxon>
        <taxon>Endomicrobiales</taxon>
        <taxon>Endomicrobiaceae</taxon>
        <taxon>Candidatus Endomicrobiellum</taxon>
    </lineage>
</organism>